<comment type="function">
    <text evidence="7">Component of the ribosome, a large ribonucleoprotein complex responsible for the synthesis of proteins in the cell. The small ribosomal subunit (SSU) binds messenger RNAs (mRNAs) and translates the encoded message by selecting cognate aminoacyl-transfer RNA (tRNA) molecules. The large subunit (LSU) contains the ribosomal catalytic site termed the peptidyl transferase center (PTC), which catalyzes the formation of peptide bonds, thereby polymerizing the amino acids delivered by tRNAs into a polypeptide chain. The nascent polypeptides leave the ribosome through a tunnel in the LSU and interact with protein factors that function in enzymatic processing, targeting, and the membrane insertion of nascent chains at the exit of the ribosomal tunnel.</text>
</comment>
<comment type="subunit">
    <text evidence="3 8">Component of the large ribosomal subunit (LSU). Mature yeast ribosomes consist of a small (40S) and a large (60S) subunit. The 40S small subunit contains 1 molecule of ribosomal RNA (18S rRNA) and 33 different proteins (encoded by 57 genes). The large 60S subunit contains 3 rRNA molecules (25S, 5.8S and 5S rRNA) and 46 different proteins (encoded by 81 genes) (PubMed:22096102, PubMed:9559554).</text>
</comment>
<comment type="subcellular location">
    <subcellularLocation>
        <location evidence="1 3">Cytoplasm</location>
    </subcellularLocation>
</comment>
<comment type="miscellaneous">
    <text evidence="2">Present with 23600 molecules/cell in log phase SD medium.</text>
</comment>
<comment type="miscellaneous">
    <text evidence="6">There are 2 genes for eL34 in yeast.</text>
</comment>
<comment type="similarity">
    <text evidence="6">Belongs to the eukaryotic ribosomal protein eL34 family.</text>
</comment>
<keyword id="KW-0002">3D-structure</keyword>
<keyword id="KW-0963">Cytoplasm</keyword>
<keyword id="KW-1185">Reference proteome</keyword>
<keyword id="KW-0687">Ribonucleoprotein</keyword>
<keyword id="KW-0689">Ribosomal protein</keyword>
<organism>
    <name type="scientific">Saccharomyces cerevisiae (strain ATCC 204508 / S288c)</name>
    <name type="common">Baker's yeast</name>
    <dbReference type="NCBI Taxonomy" id="559292"/>
    <lineage>
        <taxon>Eukaryota</taxon>
        <taxon>Fungi</taxon>
        <taxon>Dikarya</taxon>
        <taxon>Ascomycota</taxon>
        <taxon>Saccharomycotina</taxon>
        <taxon>Saccharomycetes</taxon>
        <taxon>Saccharomycetales</taxon>
        <taxon>Saccharomycetaceae</taxon>
        <taxon>Saccharomyces</taxon>
    </lineage>
</organism>
<dbReference type="EMBL" id="U18813">
    <property type="protein sequence ID" value="AAB64609.1"/>
    <property type="molecule type" value="Genomic_DNA"/>
</dbReference>
<dbReference type="EMBL" id="BK006939">
    <property type="protein sequence ID" value="DAA07714.1"/>
    <property type="molecule type" value="Genomic_DNA"/>
</dbReference>
<dbReference type="PIR" id="S53549">
    <property type="entry name" value="S53549"/>
</dbReference>
<dbReference type="RefSeq" id="NP_010977.2">
    <property type="nucleotide sequence ID" value="NM_001180036.1"/>
</dbReference>
<dbReference type="PDB" id="3J6X">
    <property type="method" value="EM"/>
    <property type="resolution" value="6.10 A"/>
    <property type="chains" value="74=1-121"/>
</dbReference>
<dbReference type="PDB" id="3J6Y">
    <property type="method" value="EM"/>
    <property type="resolution" value="6.10 A"/>
    <property type="chains" value="74=1-121"/>
</dbReference>
<dbReference type="PDB" id="3J77">
    <property type="method" value="EM"/>
    <property type="resolution" value="6.20 A"/>
    <property type="chains" value="84=1-121"/>
</dbReference>
<dbReference type="PDB" id="3J78">
    <property type="method" value="EM"/>
    <property type="resolution" value="6.30 A"/>
    <property type="chains" value="84=1-121"/>
</dbReference>
<dbReference type="PDB" id="3JCT">
    <property type="method" value="EM"/>
    <property type="resolution" value="3.08 A"/>
    <property type="chains" value="g=1-121"/>
</dbReference>
<dbReference type="PDB" id="4U3M">
    <property type="method" value="X-ray"/>
    <property type="resolution" value="3.00 A"/>
    <property type="chains" value="O4/o4=2-121"/>
</dbReference>
<dbReference type="PDB" id="4U3N">
    <property type="method" value="X-ray"/>
    <property type="resolution" value="3.20 A"/>
    <property type="chains" value="O4/o4=2-121"/>
</dbReference>
<dbReference type="PDB" id="4U3U">
    <property type="method" value="X-ray"/>
    <property type="resolution" value="2.90 A"/>
    <property type="chains" value="O4/o4=2-121"/>
</dbReference>
<dbReference type="PDB" id="4U4N">
    <property type="method" value="X-ray"/>
    <property type="resolution" value="3.10 A"/>
    <property type="chains" value="O4/o4=2-121"/>
</dbReference>
<dbReference type="PDB" id="4U4O">
    <property type="method" value="X-ray"/>
    <property type="resolution" value="3.60 A"/>
    <property type="chains" value="O4/o4=2-109"/>
</dbReference>
<dbReference type="PDB" id="4U4Q">
    <property type="method" value="X-ray"/>
    <property type="resolution" value="3.00 A"/>
    <property type="chains" value="O4/o4=2-120"/>
</dbReference>
<dbReference type="PDB" id="4U4R">
    <property type="method" value="X-ray"/>
    <property type="resolution" value="2.80 A"/>
    <property type="chains" value="O4/o4=2-121"/>
</dbReference>
<dbReference type="PDB" id="4U4U">
    <property type="method" value="X-ray"/>
    <property type="resolution" value="3.00 A"/>
    <property type="chains" value="O4/o4=2-121"/>
</dbReference>
<dbReference type="PDB" id="4U4Y">
    <property type="method" value="X-ray"/>
    <property type="resolution" value="3.20 A"/>
    <property type="chains" value="O4/o4=2-120"/>
</dbReference>
<dbReference type="PDB" id="4U4Z">
    <property type="method" value="X-ray"/>
    <property type="resolution" value="3.10 A"/>
    <property type="chains" value="O4/o4=2-109"/>
</dbReference>
<dbReference type="PDB" id="4U50">
    <property type="method" value="X-ray"/>
    <property type="resolution" value="3.20 A"/>
    <property type="chains" value="O4/o4=2-120"/>
</dbReference>
<dbReference type="PDB" id="4U51">
    <property type="method" value="X-ray"/>
    <property type="resolution" value="3.20 A"/>
    <property type="chains" value="O4/o4=2-120"/>
</dbReference>
<dbReference type="PDB" id="4U52">
    <property type="method" value="X-ray"/>
    <property type="resolution" value="3.00 A"/>
    <property type="chains" value="O4/o4=2-109"/>
</dbReference>
<dbReference type="PDB" id="4U53">
    <property type="method" value="X-ray"/>
    <property type="resolution" value="3.30 A"/>
    <property type="chains" value="O4/o4=2-121"/>
</dbReference>
<dbReference type="PDB" id="4U55">
    <property type="method" value="X-ray"/>
    <property type="resolution" value="3.20 A"/>
    <property type="chains" value="O4/o4=2-120"/>
</dbReference>
<dbReference type="PDB" id="4U56">
    <property type="method" value="X-ray"/>
    <property type="resolution" value="3.45 A"/>
    <property type="chains" value="O4/o4=2-120"/>
</dbReference>
<dbReference type="PDB" id="4U6F">
    <property type="method" value="X-ray"/>
    <property type="resolution" value="3.10 A"/>
    <property type="chains" value="O4/o4=2-120"/>
</dbReference>
<dbReference type="PDB" id="4V6I">
    <property type="method" value="EM"/>
    <property type="resolution" value="8.80 A"/>
    <property type="chains" value="Bi=1-118"/>
</dbReference>
<dbReference type="PDB" id="4V7F">
    <property type="method" value="EM"/>
    <property type="resolution" value="8.70 A"/>
    <property type="chains" value="f=1-121"/>
</dbReference>
<dbReference type="PDB" id="4V88">
    <property type="method" value="X-ray"/>
    <property type="resolution" value="3.00 A"/>
    <property type="chains" value="Bg/Dg=1-121"/>
</dbReference>
<dbReference type="PDB" id="4V8T">
    <property type="method" value="EM"/>
    <property type="resolution" value="8.10 A"/>
    <property type="chains" value="g=1-121"/>
</dbReference>
<dbReference type="PDB" id="4V8Y">
    <property type="method" value="EM"/>
    <property type="resolution" value="4.30 A"/>
    <property type="chains" value="Bg=2-121"/>
</dbReference>
<dbReference type="PDB" id="4V8Z">
    <property type="method" value="EM"/>
    <property type="resolution" value="6.60 A"/>
    <property type="chains" value="Bg=2-121"/>
</dbReference>
<dbReference type="PDB" id="4V91">
    <property type="method" value="EM"/>
    <property type="resolution" value="3.70 A"/>
    <property type="chains" value="g=1-121"/>
</dbReference>
<dbReference type="PDB" id="5APN">
    <property type="method" value="EM"/>
    <property type="resolution" value="3.91 A"/>
    <property type="chains" value="g=1-121"/>
</dbReference>
<dbReference type="PDB" id="5APO">
    <property type="method" value="EM"/>
    <property type="resolution" value="3.41 A"/>
    <property type="chains" value="g=1-121"/>
</dbReference>
<dbReference type="PDB" id="5DAT">
    <property type="method" value="X-ray"/>
    <property type="resolution" value="3.15 A"/>
    <property type="chains" value="O4/o4=2-121"/>
</dbReference>
<dbReference type="PDB" id="5DC3">
    <property type="method" value="X-ray"/>
    <property type="resolution" value="3.25 A"/>
    <property type="chains" value="O4/o4=2-121"/>
</dbReference>
<dbReference type="PDB" id="5DGE">
    <property type="method" value="X-ray"/>
    <property type="resolution" value="3.45 A"/>
    <property type="chains" value="O4/o4=2-109"/>
</dbReference>
<dbReference type="PDB" id="5DGF">
    <property type="method" value="X-ray"/>
    <property type="resolution" value="3.30 A"/>
    <property type="chains" value="O4/o4=2-121"/>
</dbReference>
<dbReference type="PDB" id="5DGV">
    <property type="method" value="X-ray"/>
    <property type="resolution" value="3.10 A"/>
    <property type="chains" value="O4/o4=2-121"/>
</dbReference>
<dbReference type="PDB" id="5FCI">
    <property type="method" value="X-ray"/>
    <property type="resolution" value="3.40 A"/>
    <property type="chains" value="O4/o4=2-121"/>
</dbReference>
<dbReference type="PDB" id="5FCJ">
    <property type="method" value="X-ray"/>
    <property type="resolution" value="3.10 A"/>
    <property type="chains" value="O4/o4=2-121"/>
</dbReference>
<dbReference type="PDB" id="5GAK">
    <property type="method" value="EM"/>
    <property type="resolution" value="3.88 A"/>
    <property type="chains" value="i=1-121"/>
</dbReference>
<dbReference type="PDB" id="5H4P">
    <property type="method" value="EM"/>
    <property type="resolution" value="3.07 A"/>
    <property type="chains" value="g=1-121"/>
</dbReference>
<dbReference type="PDB" id="5I4L">
    <property type="method" value="X-ray"/>
    <property type="resolution" value="3.10 A"/>
    <property type="chains" value="O4/o4=2-113"/>
</dbReference>
<dbReference type="PDB" id="5JCS">
    <property type="method" value="EM"/>
    <property type="resolution" value="9.50 A"/>
    <property type="chains" value="g=1-121"/>
</dbReference>
<dbReference type="PDB" id="5JUO">
    <property type="method" value="EM"/>
    <property type="resolution" value="4.00 A"/>
    <property type="chains" value="LA=1-121"/>
</dbReference>
<dbReference type="PDB" id="5JUP">
    <property type="method" value="EM"/>
    <property type="resolution" value="3.50 A"/>
    <property type="chains" value="LA=1-121"/>
</dbReference>
<dbReference type="PDB" id="5JUS">
    <property type="method" value="EM"/>
    <property type="resolution" value="4.20 A"/>
    <property type="chains" value="LA=1-121"/>
</dbReference>
<dbReference type="PDB" id="5JUT">
    <property type="method" value="EM"/>
    <property type="resolution" value="4.00 A"/>
    <property type="chains" value="LA=1-121"/>
</dbReference>
<dbReference type="PDB" id="5JUU">
    <property type="method" value="EM"/>
    <property type="resolution" value="4.00 A"/>
    <property type="chains" value="LA=1-121"/>
</dbReference>
<dbReference type="PDB" id="5LYB">
    <property type="method" value="X-ray"/>
    <property type="resolution" value="3.25 A"/>
    <property type="chains" value="O4/o4=2-113"/>
</dbReference>
<dbReference type="PDB" id="5M1J">
    <property type="method" value="EM"/>
    <property type="resolution" value="3.30 A"/>
    <property type="chains" value="g5=2-113"/>
</dbReference>
<dbReference type="PDB" id="5MC6">
    <property type="method" value="EM"/>
    <property type="resolution" value="3.80 A"/>
    <property type="chains" value="BN=1-121"/>
</dbReference>
<dbReference type="PDB" id="5MEI">
    <property type="method" value="X-ray"/>
    <property type="resolution" value="3.50 A"/>
    <property type="chains" value="AH/DI=2-113"/>
</dbReference>
<dbReference type="PDB" id="5NDG">
    <property type="method" value="X-ray"/>
    <property type="resolution" value="3.70 A"/>
    <property type="chains" value="O4/o4=2-113"/>
</dbReference>
<dbReference type="PDB" id="5NDV">
    <property type="method" value="X-ray"/>
    <property type="resolution" value="3.30 A"/>
    <property type="chains" value="O4/o4=2-113"/>
</dbReference>
<dbReference type="PDB" id="5NDW">
    <property type="method" value="X-ray"/>
    <property type="resolution" value="3.70 A"/>
    <property type="chains" value="O4/o4=2-113"/>
</dbReference>
<dbReference type="PDB" id="5OBM">
    <property type="method" value="X-ray"/>
    <property type="resolution" value="3.40 A"/>
    <property type="chains" value="O4/o4=2-113"/>
</dbReference>
<dbReference type="PDB" id="5ON6">
    <property type="method" value="X-ray"/>
    <property type="resolution" value="3.10 A"/>
    <property type="chains" value="AH/DI=2-113"/>
</dbReference>
<dbReference type="PDB" id="5T62">
    <property type="method" value="EM"/>
    <property type="resolution" value="3.30 A"/>
    <property type="chains" value="t=1-121"/>
</dbReference>
<dbReference type="PDB" id="5T6R">
    <property type="method" value="EM"/>
    <property type="resolution" value="4.50 A"/>
    <property type="chains" value="t=1-121"/>
</dbReference>
<dbReference type="PDB" id="5TBW">
    <property type="method" value="X-ray"/>
    <property type="resolution" value="3.00 A"/>
    <property type="chains" value="AH/DI=2-113"/>
</dbReference>
<dbReference type="PDB" id="5TGA">
    <property type="method" value="X-ray"/>
    <property type="resolution" value="3.30 A"/>
    <property type="chains" value="O4/o4=2-113"/>
</dbReference>
<dbReference type="PDB" id="5TGM">
    <property type="method" value="X-ray"/>
    <property type="resolution" value="3.50 A"/>
    <property type="chains" value="O4/o4=2-113"/>
</dbReference>
<dbReference type="PDB" id="6CB1">
    <property type="method" value="EM"/>
    <property type="resolution" value="4.60 A"/>
    <property type="chains" value="g=1-121"/>
</dbReference>
<dbReference type="PDB" id="6ELZ">
    <property type="method" value="EM"/>
    <property type="resolution" value="3.30 A"/>
    <property type="chains" value="g=1-121"/>
</dbReference>
<dbReference type="PDB" id="6EM5">
    <property type="method" value="EM"/>
    <property type="resolution" value="4.30 A"/>
    <property type="chains" value="g=1-121"/>
</dbReference>
<dbReference type="PDB" id="6FT6">
    <property type="method" value="EM"/>
    <property type="resolution" value="3.90 A"/>
    <property type="chains" value="g=1-121"/>
</dbReference>
<dbReference type="PDB" id="6GQ1">
    <property type="method" value="EM"/>
    <property type="resolution" value="4.40 A"/>
    <property type="chains" value="g=2-113"/>
</dbReference>
<dbReference type="PDB" id="6GQB">
    <property type="method" value="EM"/>
    <property type="resolution" value="3.90 A"/>
    <property type="chains" value="g=2-113"/>
</dbReference>
<dbReference type="PDB" id="6GQV">
    <property type="method" value="EM"/>
    <property type="resolution" value="4.00 A"/>
    <property type="chains" value="g=2-113"/>
</dbReference>
<dbReference type="PDB" id="6HD7">
    <property type="method" value="EM"/>
    <property type="resolution" value="3.40 A"/>
    <property type="chains" value="i=1-121"/>
</dbReference>
<dbReference type="PDB" id="6HHQ">
    <property type="method" value="X-ray"/>
    <property type="resolution" value="3.10 A"/>
    <property type="chains" value="AH/DI=1-121"/>
</dbReference>
<dbReference type="PDB" id="6I7O">
    <property type="method" value="EM"/>
    <property type="resolution" value="5.30 A"/>
    <property type="chains" value="BN/YN=2-113"/>
</dbReference>
<dbReference type="PDB" id="6M62">
    <property type="method" value="EM"/>
    <property type="resolution" value="3.20 A"/>
    <property type="chains" value="g=1-121"/>
</dbReference>
<dbReference type="PDB" id="6N8J">
    <property type="method" value="EM"/>
    <property type="resolution" value="3.50 A"/>
    <property type="chains" value="g=1-121"/>
</dbReference>
<dbReference type="PDB" id="6N8K">
    <property type="method" value="EM"/>
    <property type="resolution" value="3.60 A"/>
    <property type="chains" value="g=1-121"/>
</dbReference>
<dbReference type="PDB" id="6N8L">
    <property type="method" value="EM"/>
    <property type="resolution" value="3.60 A"/>
    <property type="chains" value="g=1-121"/>
</dbReference>
<dbReference type="PDB" id="6N8M">
    <property type="method" value="EM"/>
    <property type="resolution" value="3.50 A"/>
    <property type="chains" value="t=1-121"/>
</dbReference>
<dbReference type="PDB" id="6N8N">
    <property type="method" value="EM"/>
    <property type="resolution" value="3.80 A"/>
    <property type="chains" value="t=1-121"/>
</dbReference>
<dbReference type="PDB" id="6N8O">
    <property type="method" value="EM"/>
    <property type="resolution" value="3.50 A"/>
    <property type="chains" value="t=1-121"/>
</dbReference>
<dbReference type="PDB" id="6OIG">
    <property type="method" value="EM"/>
    <property type="resolution" value="3.80 A"/>
    <property type="chains" value="g=2-113"/>
</dbReference>
<dbReference type="PDB" id="6Q8Y">
    <property type="method" value="EM"/>
    <property type="resolution" value="3.10 A"/>
    <property type="chains" value="BN=2-113"/>
</dbReference>
<dbReference type="PDB" id="6QIK">
    <property type="method" value="EM"/>
    <property type="resolution" value="3.10 A"/>
    <property type="chains" value="g=1-121"/>
</dbReference>
<dbReference type="PDB" id="6QT0">
    <property type="method" value="EM"/>
    <property type="resolution" value="3.40 A"/>
    <property type="chains" value="g=1-121"/>
</dbReference>
<dbReference type="PDB" id="6QTZ">
    <property type="method" value="EM"/>
    <property type="resolution" value="3.50 A"/>
    <property type="chains" value="g=1-121"/>
</dbReference>
<dbReference type="PDB" id="6R84">
    <property type="method" value="EM"/>
    <property type="resolution" value="3.60 A"/>
    <property type="chains" value="i=2-113"/>
</dbReference>
<dbReference type="PDB" id="6R86">
    <property type="method" value="EM"/>
    <property type="resolution" value="3.40 A"/>
    <property type="chains" value="i=2-113"/>
</dbReference>
<dbReference type="PDB" id="6R87">
    <property type="method" value="EM"/>
    <property type="resolution" value="3.40 A"/>
    <property type="chains" value="i=2-113"/>
</dbReference>
<dbReference type="PDB" id="6RI5">
    <property type="method" value="EM"/>
    <property type="resolution" value="3.30 A"/>
    <property type="chains" value="g=1-121"/>
</dbReference>
<dbReference type="PDB" id="6RZZ">
    <property type="method" value="EM"/>
    <property type="resolution" value="3.20 A"/>
    <property type="chains" value="g=1-121"/>
</dbReference>
<dbReference type="PDB" id="6S05">
    <property type="method" value="EM"/>
    <property type="resolution" value="3.90 A"/>
    <property type="chains" value="g=1-121"/>
</dbReference>
<dbReference type="PDB" id="6S47">
    <property type="method" value="EM"/>
    <property type="resolution" value="3.28 A"/>
    <property type="chains" value="Ai=1-121"/>
</dbReference>
<dbReference type="PDB" id="6SNT">
    <property type="method" value="EM"/>
    <property type="resolution" value="2.80 A"/>
    <property type="chains" value="aj=1-121"/>
</dbReference>
<dbReference type="PDB" id="6SV4">
    <property type="method" value="EM"/>
    <property type="resolution" value="3.30 A"/>
    <property type="chains" value="BN/YN/ZN=1-121"/>
</dbReference>
<dbReference type="PDB" id="6T4Q">
    <property type="method" value="EM"/>
    <property type="resolution" value="2.60 A"/>
    <property type="chains" value="Lg=2-113"/>
</dbReference>
<dbReference type="PDB" id="6T7I">
    <property type="method" value="EM"/>
    <property type="resolution" value="3.20 A"/>
    <property type="chains" value="Lg=1-121"/>
</dbReference>
<dbReference type="PDB" id="6T7T">
    <property type="method" value="EM"/>
    <property type="resolution" value="3.10 A"/>
    <property type="chains" value="Lg=1-121"/>
</dbReference>
<dbReference type="PDB" id="6T83">
    <property type="method" value="EM"/>
    <property type="resolution" value="4.00 A"/>
    <property type="chains" value="R/gy=1-121"/>
</dbReference>
<dbReference type="PDB" id="6TB3">
    <property type="method" value="EM"/>
    <property type="resolution" value="2.80 A"/>
    <property type="chains" value="BN=2-113"/>
</dbReference>
<dbReference type="PDB" id="6TNU">
    <property type="method" value="EM"/>
    <property type="resolution" value="3.10 A"/>
    <property type="chains" value="BN=2-113"/>
</dbReference>
<dbReference type="PDB" id="6WOO">
    <property type="method" value="EM"/>
    <property type="resolution" value="2.90 A"/>
    <property type="chains" value="g=2-121"/>
</dbReference>
<dbReference type="PDB" id="6XIQ">
    <property type="method" value="EM"/>
    <property type="resolution" value="4.20 A"/>
    <property type="chains" value="g=1-121"/>
</dbReference>
<dbReference type="PDB" id="6XIR">
    <property type="method" value="EM"/>
    <property type="resolution" value="3.20 A"/>
    <property type="chains" value="g=1-121"/>
</dbReference>
<dbReference type="PDB" id="6YLG">
    <property type="method" value="EM"/>
    <property type="resolution" value="3.00 A"/>
    <property type="chains" value="g=1-121"/>
</dbReference>
<dbReference type="PDB" id="6YLH">
    <property type="method" value="EM"/>
    <property type="resolution" value="3.10 A"/>
    <property type="chains" value="g=1-121"/>
</dbReference>
<dbReference type="PDB" id="6YLX">
    <property type="method" value="EM"/>
    <property type="resolution" value="3.90 A"/>
    <property type="chains" value="g=1-121"/>
</dbReference>
<dbReference type="PDB" id="6YLY">
    <property type="method" value="EM"/>
    <property type="resolution" value="3.80 A"/>
    <property type="chains" value="g=1-121"/>
</dbReference>
<dbReference type="PDB" id="6Z6J">
    <property type="method" value="EM"/>
    <property type="resolution" value="3.40 A"/>
    <property type="chains" value="Lg=1-121"/>
</dbReference>
<dbReference type="PDB" id="6Z6K">
    <property type="method" value="EM"/>
    <property type="resolution" value="3.40 A"/>
    <property type="chains" value="Lg=1-121"/>
</dbReference>
<dbReference type="PDB" id="7AZY">
    <property type="method" value="EM"/>
    <property type="resolution" value="2.88 A"/>
    <property type="chains" value="B=1-121"/>
</dbReference>
<dbReference type="PDB" id="7B7D">
    <property type="method" value="EM"/>
    <property type="resolution" value="3.30 A"/>
    <property type="chains" value="Lc=2-113"/>
</dbReference>
<dbReference type="PDB" id="7BT6">
    <property type="method" value="EM"/>
    <property type="resolution" value="3.12 A"/>
    <property type="chains" value="g=1-121"/>
</dbReference>
<dbReference type="PDB" id="7BTB">
    <property type="method" value="EM"/>
    <property type="resolution" value="3.22 A"/>
    <property type="chains" value="g=1-121"/>
</dbReference>
<dbReference type="PDB" id="7MPI">
    <property type="method" value="EM"/>
    <property type="resolution" value="3.05 A"/>
    <property type="chains" value="Ag=2-113"/>
</dbReference>
<dbReference type="PDB" id="7MPJ">
    <property type="method" value="EM"/>
    <property type="resolution" value="2.70 A"/>
    <property type="chains" value="Ag=2-113"/>
</dbReference>
<dbReference type="PDB" id="7N8B">
    <property type="method" value="EM"/>
    <property type="resolution" value="3.05 A"/>
    <property type="chains" value="Ag=2-113"/>
</dbReference>
<dbReference type="PDB" id="7NAC">
    <property type="method" value="EM"/>
    <property type="resolution" value="3.04 A"/>
    <property type="chains" value="g=1-121"/>
</dbReference>
<dbReference type="PDB" id="7NAD">
    <property type="method" value="EM"/>
    <property type="resolution" value="3.04 A"/>
    <property type="chains" value="g=1-121"/>
</dbReference>
<dbReference type="PDB" id="7NRC">
    <property type="method" value="EM"/>
    <property type="resolution" value="3.90 A"/>
    <property type="chains" value="Li=2-113"/>
</dbReference>
<dbReference type="PDB" id="7NRD">
    <property type="method" value="EM"/>
    <property type="resolution" value="4.36 A"/>
    <property type="chains" value="Li=2-113"/>
</dbReference>
<dbReference type="PDB" id="7OF1">
    <property type="method" value="EM"/>
    <property type="resolution" value="3.10 A"/>
    <property type="chains" value="g=1-121"/>
</dbReference>
<dbReference type="PDB" id="7OH3">
    <property type="method" value="EM"/>
    <property type="resolution" value="3.40 A"/>
    <property type="chains" value="g=1-121"/>
</dbReference>
<dbReference type="PDB" id="7OHQ">
    <property type="method" value="EM"/>
    <property type="resolution" value="3.10 A"/>
    <property type="chains" value="g=1-121"/>
</dbReference>
<dbReference type="PDB" id="7OHR">
    <property type="method" value="EM"/>
    <property type="resolution" value="4.72 A"/>
    <property type="chains" value="g=1-121"/>
</dbReference>
<dbReference type="PDB" id="7R6K">
    <property type="method" value="EM"/>
    <property type="resolution" value="3.17 A"/>
    <property type="chains" value="g=1-121"/>
</dbReference>
<dbReference type="PDB" id="7R6Q">
    <property type="method" value="EM"/>
    <property type="resolution" value="2.98 A"/>
    <property type="chains" value="g=31-80"/>
</dbReference>
<dbReference type="PDB" id="7R72">
    <property type="method" value="EM"/>
    <property type="resolution" value="3.07 A"/>
    <property type="chains" value="g=1-121"/>
</dbReference>
<dbReference type="PDB" id="7R7A">
    <property type="method" value="EM"/>
    <property type="resolution" value="3.04 A"/>
    <property type="chains" value="g=1-121"/>
</dbReference>
<dbReference type="PDB" id="7TOO">
    <property type="method" value="EM"/>
    <property type="resolution" value="2.70 A"/>
    <property type="chains" value="AL34=1-121"/>
</dbReference>
<dbReference type="PDB" id="7TOP">
    <property type="method" value="EM"/>
    <property type="resolution" value="2.40 A"/>
    <property type="chains" value="AL34=1-121"/>
</dbReference>
<dbReference type="PDB" id="7U0H">
    <property type="method" value="EM"/>
    <property type="resolution" value="2.76 A"/>
    <property type="chains" value="g=1-121"/>
</dbReference>
<dbReference type="PDB" id="7UG6">
    <property type="method" value="EM"/>
    <property type="resolution" value="2.90 A"/>
    <property type="chains" value="g=1-121"/>
</dbReference>
<dbReference type="PDB" id="7UOO">
    <property type="method" value="EM"/>
    <property type="resolution" value="2.34 A"/>
    <property type="chains" value="g=1-121"/>
</dbReference>
<dbReference type="PDB" id="7UQB">
    <property type="method" value="EM"/>
    <property type="resolution" value="2.43 A"/>
    <property type="chains" value="g=1-121"/>
</dbReference>
<dbReference type="PDB" id="7UQZ">
    <property type="method" value="EM"/>
    <property type="resolution" value="2.44 A"/>
    <property type="chains" value="g=1-120"/>
</dbReference>
<dbReference type="PDB" id="7V08">
    <property type="method" value="EM"/>
    <property type="resolution" value="2.36 A"/>
    <property type="chains" value="g=1-121"/>
</dbReference>
<dbReference type="PDB" id="7Z34">
    <property type="method" value="EM"/>
    <property type="resolution" value="3.80 A"/>
    <property type="chains" value="g=1-121"/>
</dbReference>
<dbReference type="PDB" id="7ZPQ">
    <property type="method" value="EM"/>
    <property type="resolution" value="3.47 A"/>
    <property type="chains" value="Bf=2-113"/>
</dbReference>
<dbReference type="PDB" id="7ZRS">
    <property type="method" value="EM"/>
    <property type="resolution" value="4.80 A"/>
    <property type="chains" value="Bf=2-113"/>
</dbReference>
<dbReference type="PDB" id="7ZS5">
    <property type="method" value="EM"/>
    <property type="resolution" value="3.20 A"/>
    <property type="chains" value="Bh=2-113"/>
</dbReference>
<dbReference type="PDB" id="7ZUW">
    <property type="method" value="EM"/>
    <property type="resolution" value="4.30 A"/>
    <property type="chains" value="Bf=2-113"/>
</dbReference>
<dbReference type="PDB" id="7ZUX">
    <property type="method" value="EM"/>
    <property type="resolution" value="2.50 A"/>
    <property type="chains" value="Ef=2-113"/>
</dbReference>
<dbReference type="PDB" id="7ZW0">
    <property type="method" value="EM"/>
    <property type="resolution" value="2.40 A"/>
    <property type="chains" value="Lj=1-121"/>
</dbReference>
<dbReference type="PDB" id="8AAF">
    <property type="method" value="EM"/>
    <property type="resolution" value="2.50 A"/>
    <property type="chains" value="T=1-121"/>
</dbReference>
<dbReference type="PDB" id="8AGT">
    <property type="method" value="EM"/>
    <property type="resolution" value="2.60 A"/>
    <property type="chains" value="T=1-121"/>
</dbReference>
<dbReference type="PDB" id="8AGU">
    <property type="method" value="EM"/>
    <property type="resolution" value="2.70 A"/>
    <property type="chains" value="T=1-121"/>
</dbReference>
<dbReference type="PDB" id="8AGV">
    <property type="method" value="EM"/>
    <property type="resolution" value="2.60 A"/>
    <property type="chains" value="T=1-121"/>
</dbReference>
<dbReference type="PDB" id="8AGW">
    <property type="method" value="EM"/>
    <property type="resolution" value="2.60 A"/>
    <property type="chains" value="T=1-121"/>
</dbReference>
<dbReference type="PDB" id="8AGX">
    <property type="method" value="EM"/>
    <property type="resolution" value="2.40 A"/>
    <property type="chains" value="T=1-121"/>
</dbReference>
<dbReference type="PDB" id="8AGZ">
    <property type="method" value="EM"/>
    <property type="resolution" value="2.60 A"/>
    <property type="chains" value="T=1-121"/>
</dbReference>
<dbReference type="PDB" id="8BIP">
    <property type="method" value="EM"/>
    <property type="resolution" value="3.10 A"/>
    <property type="chains" value="Lg=2-113"/>
</dbReference>
<dbReference type="PDB" id="8BJQ">
    <property type="method" value="EM"/>
    <property type="resolution" value="3.80 A"/>
    <property type="chains" value="Lg=2-113"/>
</dbReference>
<dbReference type="PDB" id="8BN3">
    <property type="method" value="EM"/>
    <property type="resolution" value="2.40 A"/>
    <property type="chains" value="O4=2-112"/>
</dbReference>
<dbReference type="PDB" id="8BQD">
    <property type="method" value="EM"/>
    <property type="resolution" value="3.90 A"/>
    <property type="chains" value="BN=2-113"/>
</dbReference>
<dbReference type="PDB" id="8BQX">
    <property type="method" value="EM"/>
    <property type="resolution" value="3.80 A"/>
    <property type="chains" value="BN=2-113"/>
</dbReference>
<dbReference type="PDB" id="8CCS">
    <property type="method" value="EM"/>
    <property type="resolution" value="1.97 A"/>
    <property type="chains" value="S=1-121"/>
</dbReference>
<dbReference type="PDB" id="8CDL">
    <property type="method" value="EM"/>
    <property type="resolution" value="2.72 A"/>
    <property type="chains" value="S=1-121"/>
</dbReference>
<dbReference type="PDB" id="8CDR">
    <property type="method" value="EM"/>
    <property type="resolution" value="2.04 A"/>
    <property type="chains" value="S=1-121"/>
</dbReference>
<dbReference type="PDB" id="8CEH">
    <property type="method" value="EM"/>
    <property type="resolution" value="2.05 A"/>
    <property type="chains" value="S=1-121"/>
</dbReference>
<dbReference type="PDB" id="8CF5">
    <property type="method" value="EM"/>
    <property type="resolution" value="2.71 A"/>
    <property type="chains" value="S=1-121"/>
</dbReference>
<dbReference type="PDB" id="8CG8">
    <property type="method" value="EM"/>
    <property type="resolution" value="2.57 A"/>
    <property type="chains" value="S=1-121"/>
</dbReference>
<dbReference type="PDB" id="8CGN">
    <property type="method" value="EM"/>
    <property type="resolution" value="2.28 A"/>
    <property type="chains" value="S=1-121"/>
</dbReference>
<dbReference type="PDB" id="8CIV">
    <property type="method" value="EM"/>
    <property type="resolution" value="2.47 A"/>
    <property type="chains" value="S=1-121"/>
</dbReference>
<dbReference type="PDB" id="8CKU">
    <property type="method" value="EM"/>
    <property type="resolution" value="3.11 A"/>
    <property type="chains" value="S=1-121"/>
</dbReference>
<dbReference type="PDB" id="8CMJ">
    <property type="method" value="EM"/>
    <property type="resolution" value="3.79 A"/>
    <property type="chains" value="S=1-121"/>
</dbReference>
<dbReference type="PDB" id="8EUB">
    <property type="method" value="EM"/>
    <property type="resolution" value="2.52 A"/>
    <property type="chains" value="Ag=1-121"/>
</dbReference>
<dbReference type="PDB" id="8EVP">
    <property type="method" value="EM"/>
    <property type="resolution" value="2.38 A"/>
    <property type="chains" value="Ag=1-121"/>
</dbReference>
<dbReference type="PDB" id="8EVQ">
    <property type="method" value="EM"/>
    <property type="resolution" value="2.72 A"/>
    <property type="chains" value="Ag=1-121"/>
</dbReference>
<dbReference type="PDB" id="8EVR">
    <property type="method" value="EM"/>
    <property type="resolution" value="2.87 A"/>
    <property type="chains" value="Ag=1-121"/>
</dbReference>
<dbReference type="PDB" id="8EVS">
    <property type="method" value="EM"/>
    <property type="resolution" value="2.62 A"/>
    <property type="chains" value="Ag=1-121"/>
</dbReference>
<dbReference type="PDB" id="8EVT">
    <property type="method" value="EM"/>
    <property type="resolution" value="2.20 A"/>
    <property type="chains" value="Ag=1-121"/>
</dbReference>
<dbReference type="PDB" id="8EWB">
    <property type="method" value="EM"/>
    <property type="resolution" value="2.87 A"/>
    <property type="chains" value="Ag=1-121"/>
</dbReference>
<dbReference type="PDB" id="8EWC">
    <property type="method" value="EM"/>
    <property type="resolution" value="2.45 A"/>
    <property type="chains" value="Ag=1-121"/>
</dbReference>
<dbReference type="PDB" id="8HFR">
    <property type="method" value="EM"/>
    <property type="resolution" value="2.64 A"/>
    <property type="chains" value="g2=1-121"/>
</dbReference>
<dbReference type="PDB" id="8K2D">
    <property type="method" value="EM"/>
    <property type="resolution" value="3.20 A"/>
    <property type="chains" value="Lg=1-121"/>
</dbReference>
<dbReference type="PDB" id="8K82">
    <property type="method" value="EM"/>
    <property type="resolution" value="3.00 A"/>
    <property type="chains" value="Lg=1-121"/>
</dbReference>
<dbReference type="PDB" id="8P4V">
    <property type="method" value="X-ray"/>
    <property type="resolution" value="3.16 A"/>
    <property type="chains" value="AH/DI=1-121"/>
</dbReference>
<dbReference type="PDB" id="8P8M">
    <property type="method" value="EM"/>
    <property type="resolution" value="2.66 A"/>
    <property type="chains" value="RG=1-121"/>
</dbReference>
<dbReference type="PDB" id="8P8N">
    <property type="method" value="EM"/>
    <property type="resolution" value="2.15 A"/>
    <property type="chains" value="RG=1-121"/>
</dbReference>
<dbReference type="PDB" id="8P8U">
    <property type="method" value="EM"/>
    <property type="resolution" value="2.23 A"/>
    <property type="chains" value="RG=1-121"/>
</dbReference>
<dbReference type="PDB" id="8P9A">
    <property type="method" value="X-ray"/>
    <property type="resolution" value="2.90 A"/>
    <property type="chains" value="AH/DI=1-121"/>
</dbReference>
<dbReference type="PDB" id="8PFR">
    <property type="method" value="EM"/>
    <property type="resolution" value="2.15 A"/>
    <property type="chains" value="RG=1-121"/>
</dbReference>
<dbReference type="PDB" id="8T2X">
    <property type="method" value="EM"/>
    <property type="resolution" value="2.46 A"/>
    <property type="chains" value="Ag=1-121"/>
</dbReference>
<dbReference type="PDB" id="8T2Y">
    <property type="method" value="EM"/>
    <property type="resolution" value="2.20 A"/>
    <property type="chains" value="Ag=1-121"/>
</dbReference>
<dbReference type="PDB" id="8T2Z">
    <property type="method" value="EM"/>
    <property type="resolution" value="2.40 A"/>
    <property type="chains" value="Ag=1-121"/>
</dbReference>
<dbReference type="PDB" id="8T30">
    <property type="method" value="EM"/>
    <property type="resolution" value="2.88 A"/>
    <property type="chains" value="Ag=1-121"/>
</dbReference>
<dbReference type="PDB" id="8T3A">
    <property type="method" value="EM"/>
    <property type="resolution" value="2.86 A"/>
    <property type="chains" value="Ag=1-121"/>
</dbReference>
<dbReference type="PDB" id="8T3B">
    <property type="method" value="EM"/>
    <property type="resolution" value="3.08 A"/>
    <property type="chains" value="Ag=1-121"/>
</dbReference>
<dbReference type="PDB" id="8T3C">
    <property type="method" value="EM"/>
    <property type="resolution" value="3.86 A"/>
    <property type="chains" value="Ag=1-121"/>
</dbReference>
<dbReference type="PDB" id="8T3D">
    <property type="method" value="EM"/>
    <property type="resolution" value="2.95 A"/>
    <property type="chains" value="Ag=1-121"/>
</dbReference>
<dbReference type="PDB" id="8T3E">
    <property type="method" value="EM"/>
    <property type="resolution" value="3.04 A"/>
    <property type="chains" value="Ag=1-121"/>
</dbReference>
<dbReference type="PDB" id="8T3F">
    <property type="method" value="EM"/>
    <property type="resolution" value="3.09 A"/>
    <property type="chains" value="Ag=1-121"/>
</dbReference>
<dbReference type="PDB" id="8UT0">
    <property type="method" value="EM"/>
    <property type="resolution" value="3.22 A"/>
    <property type="chains" value="Li=2-113"/>
</dbReference>
<dbReference type="PDB" id="8UTI">
    <property type="method" value="EM"/>
    <property type="resolution" value="3.13 A"/>
    <property type="chains" value="Li=2-113"/>
</dbReference>
<dbReference type="PDB" id="8V87">
    <property type="method" value="EM"/>
    <property type="resolution" value="2.66 A"/>
    <property type="chains" value="g=1-121"/>
</dbReference>
<dbReference type="PDB" id="8XU8">
    <property type="method" value="EM"/>
    <property type="resolution" value="3.40 A"/>
    <property type="chains" value="i=2-113"/>
</dbReference>
<dbReference type="PDB" id="8Y0U">
    <property type="method" value="EM"/>
    <property type="resolution" value="3.59 A"/>
    <property type="chains" value="Lg=1-121"/>
</dbReference>
<dbReference type="PDB" id="8YLD">
    <property type="method" value="EM"/>
    <property type="resolution" value="3.90 A"/>
    <property type="chains" value="i=2-113"/>
</dbReference>
<dbReference type="PDB" id="8YLR">
    <property type="method" value="EM"/>
    <property type="resolution" value="3.90 A"/>
    <property type="chains" value="i=2-113"/>
</dbReference>
<dbReference type="PDB" id="8Z70">
    <property type="method" value="EM"/>
    <property type="resolution" value="3.20 A"/>
    <property type="chains" value="i=2-113"/>
</dbReference>
<dbReference type="PDB" id="8Z71">
    <property type="method" value="EM"/>
    <property type="resolution" value="3.60 A"/>
    <property type="chains" value="i=2-113"/>
</dbReference>
<dbReference type="PDB" id="9F9S">
    <property type="method" value="EM"/>
    <property type="resolution" value="2.90 A"/>
    <property type="chains" value="Lk/Mk=1-121"/>
</dbReference>
<dbReference type="PDBsum" id="3J6X"/>
<dbReference type="PDBsum" id="3J6Y"/>
<dbReference type="PDBsum" id="3J77"/>
<dbReference type="PDBsum" id="3J78"/>
<dbReference type="PDBsum" id="3JCT"/>
<dbReference type="PDBsum" id="4U3M"/>
<dbReference type="PDBsum" id="4U3N"/>
<dbReference type="PDBsum" id="4U3U"/>
<dbReference type="PDBsum" id="4U4N"/>
<dbReference type="PDBsum" id="4U4O"/>
<dbReference type="PDBsum" id="4U4Q"/>
<dbReference type="PDBsum" id="4U4R"/>
<dbReference type="PDBsum" id="4U4U"/>
<dbReference type="PDBsum" id="4U4Y"/>
<dbReference type="PDBsum" id="4U4Z"/>
<dbReference type="PDBsum" id="4U50"/>
<dbReference type="PDBsum" id="4U51"/>
<dbReference type="PDBsum" id="4U52"/>
<dbReference type="PDBsum" id="4U53"/>
<dbReference type="PDBsum" id="4U55"/>
<dbReference type="PDBsum" id="4U56"/>
<dbReference type="PDBsum" id="4U6F"/>
<dbReference type="PDBsum" id="4V6I"/>
<dbReference type="PDBsum" id="4V7F"/>
<dbReference type="PDBsum" id="4V88"/>
<dbReference type="PDBsum" id="4V8T"/>
<dbReference type="PDBsum" id="4V8Y"/>
<dbReference type="PDBsum" id="4V8Z"/>
<dbReference type="PDBsum" id="4V91"/>
<dbReference type="PDBsum" id="5APN"/>
<dbReference type="PDBsum" id="5APO"/>
<dbReference type="PDBsum" id="5DAT"/>
<dbReference type="PDBsum" id="5DC3"/>
<dbReference type="PDBsum" id="5DGE"/>
<dbReference type="PDBsum" id="5DGF"/>
<dbReference type="PDBsum" id="5DGV"/>
<dbReference type="PDBsum" id="5FCI"/>
<dbReference type="PDBsum" id="5FCJ"/>
<dbReference type="PDBsum" id="5GAK"/>
<dbReference type="PDBsum" id="5H4P"/>
<dbReference type="PDBsum" id="5I4L"/>
<dbReference type="PDBsum" id="5JCS"/>
<dbReference type="PDBsum" id="5JUO"/>
<dbReference type="PDBsum" id="5JUP"/>
<dbReference type="PDBsum" id="5JUS"/>
<dbReference type="PDBsum" id="5JUT"/>
<dbReference type="PDBsum" id="5JUU"/>
<dbReference type="PDBsum" id="5LYB"/>
<dbReference type="PDBsum" id="5M1J"/>
<dbReference type="PDBsum" id="5MC6"/>
<dbReference type="PDBsum" id="5MEI"/>
<dbReference type="PDBsum" id="5NDG"/>
<dbReference type="PDBsum" id="5NDV"/>
<dbReference type="PDBsum" id="5NDW"/>
<dbReference type="PDBsum" id="5OBM"/>
<dbReference type="PDBsum" id="5ON6"/>
<dbReference type="PDBsum" id="5T62"/>
<dbReference type="PDBsum" id="5T6R"/>
<dbReference type="PDBsum" id="5TBW"/>
<dbReference type="PDBsum" id="5TGA"/>
<dbReference type="PDBsum" id="5TGM"/>
<dbReference type="PDBsum" id="6CB1"/>
<dbReference type="PDBsum" id="6ELZ"/>
<dbReference type="PDBsum" id="6EM5"/>
<dbReference type="PDBsum" id="6FT6"/>
<dbReference type="PDBsum" id="6GQ1"/>
<dbReference type="PDBsum" id="6GQB"/>
<dbReference type="PDBsum" id="6GQV"/>
<dbReference type="PDBsum" id="6HD7"/>
<dbReference type="PDBsum" id="6HHQ"/>
<dbReference type="PDBsum" id="6I7O"/>
<dbReference type="PDBsum" id="6M62"/>
<dbReference type="PDBsum" id="6N8J"/>
<dbReference type="PDBsum" id="6N8K"/>
<dbReference type="PDBsum" id="6N8L"/>
<dbReference type="PDBsum" id="6N8M"/>
<dbReference type="PDBsum" id="6N8N"/>
<dbReference type="PDBsum" id="6N8O"/>
<dbReference type="PDBsum" id="6OIG"/>
<dbReference type="PDBsum" id="6Q8Y"/>
<dbReference type="PDBsum" id="6QIK"/>
<dbReference type="PDBsum" id="6QT0"/>
<dbReference type="PDBsum" id="6QTZ"/>
<dbReference type="PDBsum" id="6R84"/>
<dbReference type="PDBsum" id="6R86"/>
<dbReference type="PDBsum" id="6R87"/>
<dbReference type="PDBsum" id="6RI5"/>
<dbReference type="PDBsum" id="6RZZ"/>
<dbReference type="PDBsum" id="6S05"/>
<dbReference type="PDBsum" id="6S47"/>
<dbReference type="PDBsum" id="6SNT"/>
<dbReference type="PDBsum" id="6SV4"/>
<dbReference type="PDBsum" id="6T4Q"/>
<dbReference type="PDBsum" id="6T7I"/>
<dbReference type="PDBsum" id="6T7T"/>
<dbReference type="PDBsum" id="6T83"/>
<dbReference type="PDBsum" id="6TB3"/>
<dbReference type="PDBsum" id="6TNU"/>
<dbReference type="PDBsum" id="6WOO"/>
<dbReference type="PDBsum" id="6XIQ"/>
<dbReference type="PDBsum" id="6XIR"/>
<dbReference type="PDBsum" id="6YLG"/>
<dbReference type="PDBsum" id="6YLH"/>
<dbReference type="PDBsum" id="6YLX"/>
<dbReference type="PDBsum" id="6YLY"/>
<dbReference type="PDBsum" id="6Z6J"/>
<dbReference type="PDBsum" id="6Z6K"/>
<dbReference type="PDBsum" id="7AZY"/>
<dbReference type="PDBsum" id="7B7D"/>
<dbReference type="PDBsum" id="7BT6"/>
<dbReference type="PDBsum" id="7BTB"/>
<dbReference type="PDBsum" id="7MPI"/>
<dbReference type="PDBsum" id="7MPJ"/>
<dbReference type="PDBsum" id="7N8B"/>
<dbReference type="PDBsum" id="7NAC"/>
<dbReference type="PDBsum" id="7NAD"/>
<dbReference type="PDBsum" id="7NRC"/>
<dbReference type="PDBsum" id="7NRD"/>
<dbReference type="PDBsum" id="7OF1"/>
<dbReference type="PDBsum" id="7OH3"/>
<dbReference type="PDBsum" id="7OHQ"/>
<dbReference type="PDBsum" id="7OHR"/>
<dbReference type="PDBsum" id="7R6K"/>
<dbReference type="PDBsum" id="7R6Q"/>
<dbReference type="PDBsum" id="7R72"/>
<dbReference type="PDBsum" id="7R7A"/>
<dbReference type="PDBsum" id="7TOO"/>
<dbReference type="PDBsum" id="7TOP"/>
<dbReference type="PDBsum" id="7U0H"/>
<dbReference type="PDBsum" id="7UG6"/>
<dbReference type="PDBsum" id="7UOO"/>
<dbReference type="PDBsum" id="7UQB"/>
<dbReference type="PDBsum" id="7UQZ"/>
<dbReference type="PDBsum" id="7V08"/>
<dbReference type="PDBsum" id="7Z34"/>
<dbReference type="PDBsum" id="7ZPQ"/>
<dbReference type="PDBsum" id="7ZRS"/>
<dbReference type="PDBsum" id="7ZS5"/>
<dbReference type="PDBsum" id="7ZUW"/>
<dbReference type="PDBsum" id="7ZUX"/>
<dbReference type="PDBsum" id="7ZW0"/>
<dbReference type="PDBsum" id="8AAF"/>
<dbReference type="PDBsum" id="8AGT"/>
<dbReference type="PDBsum" id="8AGU"/>
<dbReference type="PDBsum" id="8AGV"/>
<dbReference type="PDBsum" id="8AGW"/>
<dbReference type="PDBsum" id="8AGX"/>
<dbReference type="PDBsum" id="8AGZ"/>
<dbReference type="PDBsum" id="8BIP"/>
<dbReference type="PDBsum" id="8BJQ"/>
<dbReference type="PDBsum" id="8BN3"/>
<dbReference type="PDBsum" id="8BQD"/>
<dbReference type="PDBsum" id="8BQX"/>
<dbReference type="PDBsum" id="8CCS"/>
<dbReference type="PDBsum" id="8CDL"/>
<dbReference type="PDBsum" id="8CDR"/>
<dbReference type="PDBsum" id="8CEH"/>
<dbReference type="PDBsum" id="8CF5"/>
<dbReference type="PDBsum" id="8CG8"/>
<dbReference type="PDBsum" id="8CGN"/>
<dbReference type="PDBsum" id="8CIV"/>
<dbReference type="PDBsum" id="8CKU"/>
<dbReference type="PDBsum" id="8CMJ"/>
<dbReference type="PDBsum" id="8EUB"/>
<dbReference type="PDBsum" id="8EVP"/>
<dbReference type="PDBsum" id="8EVQ"/>
<dbReference type="PDBsum" id="8EVR"/>
<dbReference type="PDBsum" id="8EVS"/>
<dbReference type="PDBsum" id="8EVT"/>
<dbReference type="PDBsum" id="8EWB"/>
<dbReference type="PDBsum" id="8EWC"/>
<dbReference type="PDBsum" id="8HFR"/>
<dbReference type="PDBsum" id="8K2D"/>
<dbReference type="PDBsum" id="8K82"/>
<dbReference type="PDBsum" id="8P4V"/>
<dbReference type="PDBsum" id="8P8M"/>
<dbReference type="PDBsum" id="8P8N"/>
<dbReference type="PDBsum" id="8P8U"/>
<dbReference type="PDBsum" id="8P9A"/>
<dbReference type="PDBsum" id="8PFR"/>
<dbReference type="PDBsum" id="8T2X"/>
<dbReference type="PDBsum" id="8T2Y"/>
<dbReference type="PDBsum" id="8T2Z"/>
<dbReference type="PDBsum" id="8T30"/>
<dbReference type="PDBsum" id="8T3A"/>
<dbReference type="PDBsum" id="8T3B"/>
<dbReference type="PDBsum" id="8T3C"/>
<dbReference type="PDBsum" id="8T3D"/>
<dbReference type="PDBsum" id="8T3E"/>
<dbReference type="PDBsum" id="8T3F"/>
<dbReference type="PDBsum" id="8UT0"/>
<dbReference type="PDBsum" id="8UTI"/>
<dbReference type="PDBsum" id="8V87"/>
<dbReference type="PDBsum" id="8XU8"/>
<dbReference type="PDBsum" id="8Y0U"/>
<dbReference type="PDBsum" id="8YLD"/>
<dbReference type="PDBsum" id="8YLR"/>
<dbReference type="PDBsum" id="8Z70"/>
<dbReference type="PDBsum" id="8Z71"/>
<dbReference type="PDBsum" id="9F9S"/>
<dbReference type="EMDB" id="EMD-0369"/>
<dbReference type="EMDB" id="EMD-0370"/>
<dbReference type="EMDB" id="EMD-0371"/>
<dbReference type="EMDB" id="EMD-0372"/>
<dbReference type="EMDB" id="EMD-0373"/>
<dbReference type="EMDB" id="EMD-10068"/>
<dbReference type="EMDB" id="EMD-10071"/>
<dbReference type="EMDB" id="EMD-10315"/>
<dbReference type="EMDB" id="EMD-10377"/>
<dbReference type="EMDB" id="EMD-10396"/>
<dbReference type="EMDB" id="EMD-10397"/>
<dbReference type="EMDB" id="EMD-10398"/>
<dbReference type="EMDB" id="EMD-10431"/>
<dbReference type="EMDB" id="EMD-10537"/>
<dbReference type="EMDB" id="EMD-10841"/>
<dbReference type="EMDB" id="EMD-10842"/>
<dbReference type="EMDB" id="EMD-11096"/>
<dbReference type="EMDB" id="EMD-11097"/>
<dbReference type="EMDB" id="EMD-11951"/>
<dbReference type="EMDB" id="EMD-12866"/>
<dbReference type="EMDB" id="EMD-12892"/>
<dbReference type="EMDB" id="EMD-12905"/>
<dbReference type="EMDB" id="EMD-12906"/>
<dbReference type="EMDB" id="EMD-14471"/>
<dbReference type="EMDB" id="EMD-14861"/>
<dbReference type="EMDB" id="EMD-14921"/>
<dbReference type="EMDB" id="EMD-14926"/>
<dbReference type="EMDB" id="EMD-14978"/>
<dbReference type="EMDB" id="EMD-14979"/>
<dbReference type="EMDB" id="EMD-14990"/>
<dbReference type="EMDB" id="EMD-15296"/>
<dbReference type="EMDB" id="EMD-15423"/>
<dbReference type="EMDB" id="EMD-15424"/>
<dbReference type="EMDB" id="EMD-15425"/>
<dbReference type="EMDB" id="EMD-15426"/>
<dbReference type="EMDB" id="EMD-15427"/>
<dbReference type="EMDB" id="EMD-15428"/>
<dbReference type="EMDB" id="EMD-16086"/>
<dbReference type="EMDB" id="EMD-16090"/>
<dbReference type="EMDB" id="EMD-16127"/>
<dbReference type="EMDB" id="EMD-16182"/>
<dbReference type="EMDB" id="EMD-16563"/>
<dbReference type="EMDB" id="EMD-16591"/>
<dbReference type="EMDB" id="EMD-16594"/>
<dbReference type="EMDB" id="EMD-16609"/>
<dbReference type="EMDB" id="EMD-16616"/>
<dbReference type="EMDB" id="EMD-16634"/>
<dbReference type="EMDB" id="EMD-16648"/>
<dbReference type="EMDB" id="EMD-16684"/>
<dbReference type="EMDB" id="EMD-16702"/>
<dbReference type="EMDB" id="EMD-16729"/>
<dbReference type="EMDB" id="EMD-17549"/>
<dbReference type="EMDB" id="EMD-17550"/>
<dbReference type="EMDB" id="EMD-17552"/>
<dbReference type="EMDB" id="EMD-17653"/>
<dbReference type="EMDB" id="EMD-20077"/>
<dbReference type="EMDB" id="EMD-21859"/>
<dbReference type="EMDB" id="EMD-22196"/>
<dbReference type="EMDB" id="EMD-22198"/>
<dbReference type="EMDB" id="EMD-23934"/>
<dbReference type="EMDB" id="EMD-23935"/>
<dbReference type="EMDB" id="EMD-24235"/>
<dbReference type="EMDB" id="EMD-24269"/>
<dbReference type="EMDB" id="EMD-24270"/>
<dbReference type="EMDB" id="EMD-24280"/>
<dbReference type="EMDB" id="EMD-24286"/>
<dbReference type="EMDB" id="EMD-24290"/>
<dbReference type="EMDB" id="EMD-24296"/>
<dbReference type="EMDB" id="EMD-26033"/>
<dbReference type="EMDB" id="EMD-26034"/>
<dbReference type="EMDB" id="EMD-26259"/>
<dbReference type="EMDB" id="EMD-26485"/>
<dbReference type="EMDB" id="EMD-26651"/>
<dbReference type="EMDB" id="EMD-26686"/>
<dbReference type="EMDB" id="EMD-26703"/>
<dbReference type="EMDB" id="EMD-26941"/>
<dbReference type="EMDB" id="EMD-28610"/>
<dbReference type="EMDB" id="EMD-28632"/>
<dbReference type="EMDB" id="EMD-28633"/>
<dbReference type="EMDB" id="EMD-28634"/>
<dbReference type="EMDB" id="EMD-28635"/>
<dbReference type="EMDB" id="EMD-28636"/>
<dbReference type="EMDB" id="EMD-28642"/>
<dbReference type="EMDB" id="EMD-28643"/>
<dbReference type="EMDB" id="EMD-30108"/>
<dbReference type="EMDB" id="EMD-30170"/>
<dbReference type="EMDB" id="EMD-30174"/>
<dbReference type="EMDB" id="EMD-34725"/>
<dbReference type="EMDB" id="EMD-36839"/>
<dbReference type="EMDB" id="EMD-36945"/>
<dbReference type="EMDB" id="EMD-38660"/>
<dbReference type="EMDB" id="EMD-40990"/>
<dbReference type="EMDB" id="EMD-40991"/>
<dbReference type="EMDB" id="EMD-40992"/>
<dbReference type="EMDB" id="EMD-40993"/>
<dbReference type="EMDB" id="EMD-40997"/>
<dbReference type="EMDB" id="EMD-40998"/>
<dbReference type="EMDB" id="EMD-40999"/>
<dbReference type="EMDB" id="EMD-41000"/>
<dbReference type="EMDB" id="EMD-41001"/>
<dbReference type="EMDB" id="EMD-41002"/>
<dbReference type="EMDB" id="EMD-4140"/>
<dbReference type="EMDB" id="EMD-42525"/>
<dbReference type="EMDB" id="EMD-42540"/>
<dbReference type="EMDB" id="EMD-4302"/>
<dbReference type="EMDB" id="EMD-43027"/>
<dbReference type="EMDB" id="EMD-4427"/>
<dbReference type="EMDB" id="EMD-4474"/>
<dbReference type="EMDB" id="EMD-4560"/>
<dbReference type="EMDB" id="EMD-4630"/>
<dbReference type="EMDB" id="EMD-4636"/>
<dbReference type="EMDB" id="EMD-4751"/>
<dbReference type="EMDB" id="EMD-4752"/>
<dbReference type="EMDB" id="EMD-4753"/>
<dbReference type="EMDB" id="EMD-4884"/>
<dbReference type="EMDB" id="EMD-50259"/>
<dbReference type="EMDB" id="EMD-8362"/>
<dbReference type="EMDB" id="EMD-8368"/>
<dbReference type="SMR" id="P87262"/>
<dbReference type="BioGRID" id="36797">
    <property type="interactions" value="221"/>
</dbReference>
<dbReference type="ComplexPortal" id="CPX-1601">
    <property type="entry name" value="60S cytosolic large ribosomal subunit"/>
</dbReference>
<dbReference type="FunCoup" id="P87262">
    <property type="interactions" value="1119"/>
</dbReference>
<dbReference type="IntAct" id="P87262">
    <property type="interactions" value="108"/>
</dbReference>
<dbReference type="MINT" id="P87262"/>
<dbReference type="STRING" id="4932.YER056C-A"/>
<dbReference type="iPTMnet" id="P87262"/>
<dbReference type="PaxDb" id="4932-YER056C-A"/>
<dbReference type="PeptideAtlas" id="P87262"/>
<dbReference type="EnsemblFungi" id="YER056C-A_mRNA">
    <property type="protein sequence ID" value="YER056C-A"/>
    <property type="gene ID" value="YER056C-A"/>
</dbReference>
<dbReference type="GeneID" id="856784"/>
<dbReference type="KEGG" id="sce:YER056C-A"/>
<dbReference type="AGR" id="SGD:S000002135"/>
<dbReference type="SGD" id="S000002135">
    <property type="gene designation" value="RPL34A"/>
</dbReference>
<dbReference type="VEuPathDB" id="FungiDB:YER056C-A"/>
<dbReference type="eggNOG" id="KOG1790">
    <property type="taxonomic scope" value="Eukaryota"/>
</dbReference>
<dbReference type="GeneTree" id="ENSGT00940000168239"/>
<dbReference type="HOGENOM" id="CLU_118652_1_1_1"/>
<dbReference type="InParanoid" id="P87262"/>
<dbReference type="OMA" id="WMNWILV"/>
<dbReference type="OrthoDB" id="277449at2759"/>
<dbReference type="BioCyc" id="YEAST:G3O-30350-MONOMER"/>
<dbReference type="BioGRID-ORCS" id="856784">
    <property type="hits" value="4 hits in 10 CRISPR screens"/>
</dbReference>
<dbReference type="PRO" id="PR:P87262"/>
<dbReference type="Proteomes" id="UP000002311">
    <property type="component" value="Chromosome V"/>
</dbReference>
<dbReference type="RNAct" id="P87262">
    <property type="molecule type" value="protein"/>
</dbReference>
<dbReference type="GO" id="GO:0005829">
    <property type="term" value="C:cytosol"/>
    <property type="evidence" value="ECO:0000304"/>
    <property type="project" value="Reactome"/>
</dbReference>
<dbReference type="GO" id="GO:0022625">
    <property type="term" value="C:cytosolic large ribosomal subunit"/>
    <property type="evidence" value="ECO:0000318"/>
    <property type="project" value="GO_Central"/>
</dbReference>
<dbReference type="GO" id="GO:0030687">
    <property type="term" value="C:preribosome, large subunit precursor"/>
    <property type="evidence" value="ECO:0000314"/>
    <property type="project" value="SGD"/>
</dbReference>
<dbReference type="GO" id="GO:0003735">
    <property type="term" value="F:structural constituent of ribosome"/>
    <property type="evidence" value="ECO:0000318"/>
    <property type="project" value="GO_Central"/>
</dbReference>
<dbReference type="GO" id="GO:0002181">
    <property type="term" value="P:cytoplasmic translation"/>
    <property type="evidence" value="ECO:0000305"/>
    <property type="project" value="SGD"/>
</dbReference>
<dbReference type="GO" id="GO:0042254">
    <property type="term" value="P:ribosome biogenesis"/>
    <property type="evidence" value="ECO:0000314"/>
    <property type="project" value="SGD"/>
</dbReference>
<dbReference type="Gene3D" id="6.20.340.10">
    <property type="match status" value="1"/>
</dbReference>
<dbReference type="Gene3D" id="6.20.370.70">
    <property type="match status" value="1"/>
</dbReference>
<dbReference type="InterPro" id="IPR008195">
    <property type="entry name" value="Ribosomal_eL34"/>
</dbReference>
<dbReference type="InterPro" id="IPR038562">
    <property type="entry name" value="Ribosomal_eL34_C_sf"/>
</dbReference>
<dbReference type="InterPro" id="IPR018065">
    <property type="entry name" value="Ribosomal_eL34_CS"/>
</dbReference>
<dbReference type="PANTHER" id="PTHR10759">
    <property type="entry name" value="60S RIBOSOMAL PROTEIN L34"/>
    <property type="match status" value="1"/>
</dbReference>
<dbReference type="Pfam" id="PF01199">
    <property type="entry name" value="Ribosomal_L34e"/>
    <property type="match status" value="1"/>
</dbReference>
<dbReference type="PRINTS" id="PR01250">
    <property type="entry name" value="RIBOSOMALL34"/>
</dbReference>
<dbReference type="PROSITE" id="PS01145">
    <property type="entry name" value="RIBOSOMAL_L34E"/>
    <property type="match status" value="1"/>
</dbReference>
<sequence>MAQRVTFRRRNPYNTRSNKIKVVKTPGGILRAQHVKKLATRPKCGDCGSALQGISTLRPRQYATVSKTHKTVSRAYGGSRCANCVKERIIRAFLIEEQKIVKKVVKEQTEAAKKSEKKAKK</sequence>
<evidence type="ECO:0000269" key="1">
    <source>
    </source>
</evidence>
<evidence type="ECO:0000269" key="2">
    <source>
    </source>
</evidence>
<evidence type="ECO:0000269" key="3">
    <source>
    </source>
</evidence>
<evidence type="ECO:0000303" key="4">
    <source>
    </source>
</evidence>
<evidence type="ECO:0000303" key="5">
    <source>
    </source>
</evidence>
<evidence type="ECO:0000305" key="6"/>
<evidence type="ECO:0000305" key="7">
    <source>
    </source>
</evidence>
<evidence type="ECO:0000305" key="8">
    <source>
    </source>
</evidence>
<evidence type="ECO:0007829" key="9">
    <source>
        <dbReference type="PDB" id="7NAD"/>
    </source>
</evidence>
<evidence type="ECO:0007829" key="10">
    <source>
        <dbReference type="PDB" id="7R6Q"/>
    </source>
</evidence>
<proteinExistence type="evidence at protein level"/>
<reference key="1">
    <citation type="journal article" date="1997" name="Nature">
        <title>The nucleotide sequence of Saccharomyces cerevisiae chromosome V.</title>
        <authorList>
            <person name="Dietrich F.S."/>
            <person name="Mulligan J.T."/>
            <person name="Hennessy K.M."/>
            <person name="Yelton M.A."/>
            <person name="Allen E."/>
            <person name="Araujo R."/>
            <person name="Aviles E."/>
            <person name="Berno A."/>
            <person name="Brennan T."/>
            <person name="Carpenter J."/>
            <person name="Chen E."/>
            <person name="Cherry J.M."/>
            <person name="Chung E."/>
            <person name="Duncan M."/>
            <person name="Guzman E."/>
            <person name="Hartzell G."/>
            <person name="Hunicke-Smith S."/>
            <person name="Hyman R.W."/>
            <person name="Kayser A."/>
            <person name="Komp C."/>
            <person name="Lashkari D."/>
            <person name="Lew H."/>
            <person name="Lin D."/>
            <person name="Mosedale D."/>
            <person name="Nakahara K."/>
            <person name="Namath A."/>
            <person name="Norgren R."/>
            <person name="Oefner P."/>
            <person name="Oh C."/>
            <person name="Petel F.X."/>
            <person name="Roberts D."/>
            <person name="Sehl P."/>
            <person name="Schramm S."/>
            <person name="Shogren T."/>
            <person name="Smith V."/>
            <person name="Taylor P."/>
            <person name="Wei Y."/>
            <person name="Botstein D."/>
            <person name="Davis R.W."/>
        </authorList>
    </citation>
    <scope>NUCLEOTIDE SEQUENCE [LARGE SCALE GENOMIC DNA]</scope>
    <source>
        <strain>ATCC 204508 / S288c</strain>
    </source>
</reference>
<reference key="2">
    <citation type="journal article" date="2014" name="G3 (Bethesda)">
        <title>The reference genome sequence of Saccharomyces cerevisiae: Then and now.</title>
        <authorList>
            <person name="Engel S.R."/>
            <person name="Dietrich F.S."/>
            <person name="Fisk D.G."/>
            <person name="Binkley G."/>
            <person name="Balakrishnan R."/>
            <person name="Costanzo M.C."/>
            <person name="Dwight S.S."/>
            <person name="Hitz B.C."/>
            <person name="Karra K."/>
            <person name="Nash R.S."/>
            <person name="Weng S."/>
            <person name="Wong E.D."/>
            <person name="Lloyd P."/>
            <person name="Skrzypek M.S."/>
            <person name="Miyasato S.R."/>
            <person name="Simison M."/>
            <person name="Cherry J.M."/>
        </authorList>
    </citation>
    <scope>GENOME REANNOTATION</scope>
    <source>
        <strain>ATCC 204508 / S288c</strain>
    </source>
</reference>
<reference key="3">
    <citation type="journal article" date="1998" name="Yeast">
        <title>The list of cytoplasmic ribosomal proteins of Saccharomyces cerevisiae.</title>
        <authorList>
            <person name="Planta R.J."/>
            <person name="Mager W.H."/>
        </authorList>
    </citation>
    <scope>NOMENCLATURE</scope>
    <scope>SUBUNIT</scope>
</reference>
<reference key="4">
    <citation type="journal article" date="2003" name="Nature">
        <title>Global analysis of protein localization in budding yeast.</title>
        <authorList>
            <person name="Huh W.-K."/>
            <person name="Falvo J.V."/>
            <person name="Gerke L.C."/>
            <person name="Carroll A.S."/>
            <person name="Howson R.W."/>
            <person name="Weissman J.S."/>
            <person name="O'Shea E.K."/>
        </authorList>
    </citation>
    <scope>SUBCELLULAR LOCATION [LARGE SCALE ANALYSIS]</scope>
</reference>
<reference key="5">
    <citation type="journal article" date="2003" name="Nature">
        <title>Global analysis of protein expression in yeast.</title>
        <authorList>
            <person name="Ghaemmaghami S."/>
            <person name="Huh W.-K."/>
            <person name="Bower K."/>
            <person name="Howson R.W."/>
            <person name="Belle A."/>
            <person name="Dephoure N."/>
            <person name="O'Shea E.K."/>
            <person name="Weissman J.S."/>
        </authorList>
    </citation>
    <scope>LEVEL OF PROTEIN EXPRESSION [LARGE SCALE ANALYSIS]</scope>
</reference>
<reference key="6">
    <citation type="journal article" date="2014" name="Curr. Opin. Struct. Biol.">
        <title>A new system for naming ribosomal proteins.</title>
        <authorList>
            <person name="Ban N."/>
            <person name="Beckmann R."/>
            <person name="Cate J.H.D."/>
            <person name="Dinman J.D."/>
            <person name="Dragon F."/>
            <person name="Ellis S.R."/>
            <person name="Lafontaine D.L.J."/>
            <person name="Lindahl L."/>
            <person name="Liljas A."/>
            <person name="Lipton J.M."/>
            <person name="McAlear M.A."/>
            <person name="Moore P.B."/>
            <person name="Noller H.F."/>
            <person name="Ortega J."/>
            <person name="Panse V.G."/>
            <person name="Ramakrishnan V."/>
            <person name="Spahn C.M.T."/>
            <person name="Steitz T.A."/>
            <person name="Tchorzewski M."/>
            <person name="Tollervey D."/>
            <person name="Warren A.J."/>
            <person name="Williamson J.R."/>
            <person name="Wilson D."/>
            <person name="Yonath A."/>
            <person name="Yusupov M."/>
        </authorList>
    </citation>
    <scope>NOMENCLATURE</scope>
</reference>
<reference key="7">
    <citation type="journal article" date="2010" name="Science">
        <title>Crystal structure of the eukaryotic ribosome.</title>
        <authorList>
            <person name="Ben-Shem A."/>
            <person name="Jenner L."/>
            <person name="Yusupova G."/>
            <person name="Yusupov M."/>
        </authorList>
    </citation>
    <scope>X-RAY CRYSTALLOGRAPHY (4.0 ANGSTROMS) OF 80S RIBOSOME</scope>
</reference>
<reference key="8">
    <citation type="journal article" date="2011" name="Science">
        <title>The structure of the eukaryotic ribosome at 3.0 A resolution.</title>
        <authorList>
            <person name="Ben-Shem A."/>
            <person name="Garreau de Loubresse N."/>
            <person name="Melnikov S."/>
            <person name="Jenner L."/>
            <person name="Yusupova G."/>
            <person name="Yusupov M."/>
        </authorList>
    </citation>
    <scope>X-RAY CRYSTALLOGRAPHY (3.0 ANGSTROMS) OF 80S RIBOSOME</scope>
    <scope>SUBUNIT</scope>
    <scope>SUBCELLULAR LOCATION</scope>
</reference>
<accession>P87262</accession>
<accession>D3DLW0</accession>
<accession>Q03189</accession>
<feature type="chain" id="PRO_0000131845" description="Large ribosomal subunit protein eL34A">
    <location>
        <begin position="1"/>
        <end position="121"/>
    </location>
</feature>
<feature type="strand" evidence="9">
    <location>
        <begin position="8"/>
        <end position="10"/>
    </location>
</feature>
<feature type="strand" evidence="9">
    <location>
        <begin position="20"/>
        <end position="24"/>
    </location>
</feature>
<feature type="strand" evidence="9">
    <location>
        <begin position="30"/>
        <end position="34"/>
    </location>
</feature>
<feature type="turn" evidence="9">
    <location>
        <begin position="45"/>
        <end position="47"/>
    </location>
</feature>
<feature type="helix" evidence="10">
    <location>
        <begin position="59"/>
        <end position="64"/>
    </location>
</feature>
<feature type="helix" evidence="10">
    <location>
        <begin position="67"/>
        <end position="69"/>
    </location>
</feature>
<feature type="turn" evidence="9">
    <location>
        <begin position="75"/>
        <end position="79"/>
    </location>
</feature>
<feature type="helix" evidence="9">
    <location>
        <begin position="82"/>
        <end position="109"/>
    </location>
</feature>
<gene>
    <name evidence="5" type="primary">RPL34A</name>
    <name type="ordered locus">YER056C-A</name>
    <name type="ORF">YER056BC</name>
</gene>
<protein>
    <recommendedName>
        <fullName evidence="4">Large ribosomal subunit protein eL34A</fullName>
    </recommendedName>
    <alternativeName>
        <fullName evidence="5">60S ribosomal protein L34-A</fullName>
    </alternativeName>
</protein>
<name>RL34A_YEAST</name>